<name>PROB_OLEA2</name>
<accession>Q30XW1</accession>
<dbReference type="EC" id="2.7.2.11" evidence="1"/>
<dbReference type="EMBL" id="CP000112">
    <property type="protein sequence ID" value="ABB39485.1"/>
    <property type="molecule type" value="Genomic_DNA"/>
</dbReference>
<dbReference type="RefSeq" id="WP_011368514.1">
    <property type="nucleotide sequence ID" value="NC_007519.1"/>
</dbReference>
<dbReference type="SMR" id="Q30XW1"/>
<dbReference type="STRING" id="207559.Dde_2689"/>
<dbReference type="KEGG" id="dde:Dde_2689"/>
<dbReference type="eggNOG" id="COG0263">
    <property type="taxonomic scope" value="Bacteria"/>
</dbReference>
<dbReference type="HOGENOM" id="CLU_025400_2_0_7"/>
<dbReference type="UniPathway" id="UPA00098">
    <property type="reaction ID" value="UER00359"/>
</dbReference>
<dbReference type="Proteomes" id="UP000002710">
    <property type="component" value="Chromosome"/>
</dbReference>
<dbReference type="GO" id="GO:0005829">
    <property type="term" value="C:cytosol"/>
    <property type="evidence" value="ECO:0007669"/>
    <property type="project" value="TreeGrafter"/>
</dbReference>
<dbReference type="GO" id="GO:0005524">
    <property type="term" value="F:ATP binding"/>
    <property type="evidence" value="ECO:0007669"/>
    <property type="project" value="UniProtKB-KW"/>
</dbReference>
<dbReference type="GO" id="GO:0004349">
    <property type="term" value="F:glutamate 5-kinase activity"/>
    <property type="evidence" value="ECO:0007669"/>
    <property type="project" value="UniProtKB-UniRule"/>
</dbReference>
<dbReference type="GO" id="GO:0003723">
    <property type="term" value="F:RNA binding"/>
    <property type="evidence" value="ECO:0007669"/>
    <property type="project" value="InterPro"/>
</dbReference>
<dbReference type="GO" id="GO:0055129">
    <property type="term" value="P:L-proline biosynthetic process"/>
    <property type="evidence" value="ECO:0007669"/>
    <property type="project" value="UniProtKB-UniRule"/>
</dbReference>
<dbReference type="CDD" id="cd04242">
    <property type="entry name" value="AAK_G5K_ProB"/>
    <property type="match status" value="1"/>
</dbReference>
<dbReference type="CDD" id="cd21157">
    <property type="entry name" value="PUA_G5K"/>
    <property type="match status" value="1"/>
</dbReference>
<dbReference type="FunFam" id="3.40.1160.10:FF:000006">
    <property type="entry name" value="Glutamate 5-kinase"/>
    <property type="match status" value="1"/>
</dbReference>
<dbReference type="Gene3D" id="3.40.1160.10">
    <property type="entry name" value="Acetylglutamate kinase-like"/>
    <property type="match status" value="2"/>
</dbReference>
<dbReference type="Gene3D" id="2.30.130.10">
    <property type="entry name" value="PUA domain"/>
    <property type="match status" value="1"/>
</dbReference>
<dbReference type="HAMAP" id="MF_00456">
    <property type="entry name" value="ProB"/>
    <property type="match status" value="1"/>
</dbReference>
<dbReference type="InterPro" id="IPR036393">
    <property type="entry name" value="AceGlu_kinase-like_sf"/>
</dbReference>
<dbReference type="InterPro" id="IPR001048">
    <property type="entry name" value="Asp/Glu/Uridylate_kinase"/>
</dbReference>
<dbReference type="InterPro" id="IPR041739">
    <property type="entry name" value="G5K_ProB"/>
</dbReference>
<dbReference type="InterPro" id="IPR001057">
    <property type="entry name" value="Glu/AcGlu_kinase"/>
</dbReference>
<dbReference type="InterPro" id="IPR011529">
    <property type="entry name" value="Glu_5kinase"/>
</dbReference>
<dbReference type="InterPro" id="IPR005715">
    <property type="entry name" value="Glu_5kinase/COase_Synthase"/>
</dbReference>
<dbReference type="InterPro" id="IPR019797">
    <property type="entry name" value="Glutamate_5-kinase_CS"/>
</dbReference>
<dbReference type="InterPro" id="IPR002478">
    <property type="entry name" value="PUA"/>
</dbReference>
<dbReference type="InterPro" id="IPR015947">
    <property type="entry name" value="PUA-like_sf"/>
</dbReference>
<dbReference type="InterPro" id="IPR036974">
    <property type="entry name" value="PUA_sf"/>
</dbReference>
<dbReference type="NCBIfam" id="TIGR01027">
    <property type="entry name" value="proB"/>
    <property type="match status" value="1"/>
</dbReference>
<dbReference type="PANTHER" id="PTHR43654">
    <property type="entry name" value="GLUTAMATE 5-KINASE"/>
    <property type="match status" value="1"/>
</dbReference>
<dbReference type="PANTHER" id="PTHR43654:SF1">
    <property type="entry name" value="ISOPENTENYL PHOSPHATE KINASE"/>
    <property type="match status" value="1"/>
</dbReference>
<dbReference type="Pfam" id="PF00696">
    <property type="entry name" value="AA_kinase"/>
    <property type="match status" value="1"/>
</dbReference>
<dbReference type="Pfam" id="PF01472">
    <property type="entry name" value="PUA"/>
    <property type="match status" value="1"/>
</dbReference>
<dbReference type="PIRSF" id="PIRSF000729">
    <property type="entry name" value="GK"/>
    <property type="match status" value="1"/>
</dbReference>
<dbReference type="PRINTS" id="PR00474">
    <property type="entry name" value="GLU5KINASE"/>
</dbReference>
<dbReference type="SMART" id="SM00359">
    <property type="entry name" value="PUA"/>
    <property type="match status" value="1"/>
</dbReference>
<dbReference type="SUPFAM" id="SSF53633">
    <property type="entry name" value="Carbamate kinase-like"/>
    <property type="match status" value="1"/>
</dbReference>
<dbReference type="SUPFAM" id="SSF88697">
    <property type="entry name" value="PUA domain-like"/>
    <property type="match status" value="1"/>
</dbReference>
<dbReference type="PROSITE" id="PS00902">
    <property type="entry name" value="GLUTAMATE_5_KINASE"/>
    <property type="match status" value="1"/>
</dbReference>
<dbReference type="PROSITE" id="PS50890">
    <property type="entry name" value="PUA"/>
    <property type="match status" value="1"/>
</dbReference>
<protein>
    <recommendedName>
        <fullName evidence="1">Glutamate 5-kinase</fullName>
        <ecNumber evidence="1">2.7.2.11</ecNumber>
    </recommendedName>
    <alternativeName>
        <fullName evidence="1">Gamma-glutamyl kinase</fullName>
        <shortName evidence="1">GK</shortName>
    </alternativeName>
</protein>
<organism>
    <name type="scientific">Oleidesulfovibrio alaskensis (strain ATCC BAA-1058 / DSM 17464 / G20)</name>
    <name type="common">Desulfovibrio alaskensis</name>
    <dbReference type="NCBI Taxonomy" id="207559"/>
    <lineage>
        <taxon>Bacteria</taxon>
        <taxon>Pseudomonadati</taxon>
        <taxon>Thermodesulfobacteriota</taxon>
        <taxon>Desulfovibrionia</taxon>
        <taxon>Desulfovibrionales</taxon>
        <taxon>Desulfovibrionaceae</taxon>
        <taxon>Oleidesulfovibrio</taxon>
    </lineage>
</organism>
<gene>
    <name evidence="1" type="primary">proB</name>
    <name type="ordered locus">Dde_2689</name>
</gene>
<sequence>MDWQTERGQVLDSARRVVIKVGSAVLTSGNGLDVGVVDNLVAQIADLHGRGVDVVLVSSGAVSAGRAVLRRCCEIKGMPHKQAASAVGQSRLMHYYDEAFGRHGIISAQILLTKDDLRSRHRFLNARNTFAALMDWHAVPIVNENDTVAVRELEFGDNDSLASLLLNVVDADLFINLTSAGGVYADNPDTNPDARVMECIENVHGLNLDVMCGGKTAVGSGGMYSKLLAARRAAQLGVPTLILPGRKPDAMLRAFAGDEPGTWVRPEKKTVSARKFWLAYHADPTGSVVVDDGAVKALEAGKSLLPAGIIGVEGGFGRGALVRVTSAAGAVVAVGLSNYPAADLRRIMGHRTAELTAILGDNQYPEAIHRDNMLMDAVV</sequence>
<feature type="chain" id="PRO_0000230045" description="Glutamate 5-kinase">
    <location>
        <begin position="1"/>
        <end position="379"/>
    </location>
</feature>
<feature type="domain" description="PUA" evidence="1">
    <location>
        <begin position="285"/>
        <end position="362"/>
    </location>
</feature>
<feature type="binding site" evidence="1">
    <location>
        <position position="20"/>
    </location>
    <ligand>
        <name>ATP</name>
        <dbReference type="ChEBI" id="CHEBI:30616"/>
    </ligand>
</feature>
<feature type="binding site" evidence="1">
    <location>
        <position position="59"/>
    </location>
    <ligand>
        <name>substrate</name>
    </ligand>
</feature>
<feature type="binding site" evidence="1">
    <location>
        <position position="146"/>
    </location>
    <ligand>
        <name>substrate</name>
    </ligand>
</feature>
<feature type="binding site" evidence="1">
    <location>
        <position position="158"/>
    </location>
    <ligand>
        <name>substrate</name>
    </ligand>
</feature>
<feature type="binding site" evidence="1">
    <location>
        <begin position="220"/>
        <end position="226"/>
    </location>
    <ligand>
        <name>ATP</name>
        <dbReference type="ChEBI" id="CHEBI:30616"/>
    </ligand>
</feature>
<proteinExistence type="inferred from homology"/>
<comment type="function">
    <text evidence="1">Catalyzes the transfer of a phosphate group to glutamate to form L-glutamate 5-phosphate.</text>
</comment>
<comment type="catalytic activity">
    <reaction evidence="1">
        <text>L-glutamate + ATP = L-glutamyl 5-phosphate + ADP</text>
        <dbReference type="Rhea" id="RHEA:14877"/>
        <dbReference type="ChEBI" id="CHEBI:29985"/>
        <dbReference type="ChEBI" id="CHEBI:30616"/>
        <dbReference type="ChEBI" id="CHEBI:58274"/>
        <dbReference type="ChEBI" id="CHEBI:456216"/>
        <dbReference type="EC" id="2.7.2.11"/>
    </reaction>
</comment>
<comment type="pathway">
    <text evidence="1">Amino-acid biosynthesis; L-proline biosynthesis; L-glutamate 5-semialdehyde from L-glutamate: step 1/2.</text>
</comment>
<comment type="subcellular location">
    <subcellularLocation>
        <location evidence="1">Cytoplasm</location>
    </subcellularLocation>
</comment>
<comment type="similarity">
    <text evidence="1">Belongs to the glutamate 5-kinase family.</text>
</comment>
<reference key="1">
    <citation type="journal article" date="2011" name="J. Bacteriol.">
        <title>Complete genome sequence and updated annotation of Desulfovibrio alaskensis G20.</title>
        <authorList>
            <person name="Hauser L.J."/>
            <person name="Land M.L."/>
            <person name="Brown S.D."/>
            <person name="Larimer F."/>
            <person name="Keller K.L."/>
            <person name="Rapp-Giles B.J."/>
            <person name="Price M.N."/>
            <person name="Lin M."/>
            <person name="Bruce D.C."/>
            <person name="Detter J.C."/>
            <person name="Tapia R."/>
            <person name="Han C.S."/>
            <person name="Goodwin L.A."/>
            <person name="Cheng J.F."/>
            <person name="Pitluck S."/>
            <person name="Copeland A."/>
            <person name="Lucas S."/>
            <person name="Nolan M."/>
            <person name="Lapidus A.L."/>
            <person name="Palumbo A.V."/>
            <person name="Wall J.D."/>
        </authorList>
    </citation>
    <scope>NUCLEOTIDE SEQUENCE [LARGE SCALE GENOMIC DNA]</scope>
    <source>
        <strain>ATCC BAA-1058 / DSM 17464 / G20</strain>
    </source>
</reference>
<keyword id="KW-0028">Amino-acid biosynthesis</keyword>
<keyword id="KW-0067">ATP-binding</keyword>
<keyword id="KW-0963">Cytoplasm</keyword>
<keyword id="KW-0418">Kinase</keyword>
<keyword id="KW-0547">Nucleotide-binding</keyword>
<keyword id="KW-0641">Proline biosynthesis</keyword>
<keyword id="KW-1185">Reference proteome</keyword>
<keyword id="KW-0808">Transferase</keyword>
<evidence type="ECO:0000255" key="1">
    <source>
        <dbReference type="HAMAP-Rule" id="MF_00456"/>
    </source>
</evidence>